<evidence type="ECO:0000255" key="1">
    <source>
        <dbReference type="HAMAP-Rule" id="MF_00405"/>
    </source>
</evidence>
<protein>
    <recommendedName>
        <fullName evidence="1">3-hydroxydecanoyl-[acyl-carrier-protein] dehydratase</fullName>
        <ecNumber evidence="1">4.2.1.59</ecNumber>
    </recommendedName>
    <alternativeName>
        <fullName evidence="1">3-hydroxyacyl-[acyl-carrier-protein] dehydratase FabA</fullName>
    </alternativeName>
    <alternativeName>
        <fullName evidence="1">Beta-hydroxydecanoyl thioester dehydrase</fullName>
    </alternativeName>
    <alternativeName>
        <fullName evidence="1">Trans-2-decenoyl-[acyl-carrier-protein] isomerase</fullName>
        <ecNumber evidence="1">5.3.3.14</ecNumber>
    </alternativeName>
</protein>
<proteinExistence type="inferred from homology"/>
<name>FABA_SALCH</name>
<sequence length="172" mass="19077">MVDKRESYTKEDLLASSRGELFGAKGPQLPAPNMLMMDRVVKMTETGGNFDKGYVEAELDINPDLWFFGCHFIGDPVMPGCLGLDAMWQLVGFYLGWLGGEGKGRALGVGEVKFTGQVLPTARKVTYRIHFKRIVNRRLIMGLADGEVLVDGRLIYTAHDLKVGLFQDTSAF</sequence>
<keyword id="KW-0963">Cytoplasm</keyword>
<keyword id="KW-0275">Fatty acid biosynthesis</keyword>
<keyword id="KW-0276">Fatty acid metabolism</keyword>
<keyword id="KW-0413">Isomerase</keyword>
<keyword id="KW-0444">Lipid biosynthesis</keyword>
<keyword id="KW-0443">Lipid metabolism</keyword>
<keyword id="KW-0456">Lyase</keyword>
<organism>
    <name type="scientific">Salmonella choleraesuis (strain SC-B67)</name>
    <dbReference type="NCBI Taxonomy" id="321314"/>
    <lineage>
        <taxon>Bacteria</taxon>
        <taxon>Pseudomonadati</taxon>
        <taxon>Pseudomonadota</taxon>
        <taxon>Gammaproteobacteria</taxon>
        <taxon>Enterobacterales</taxon>
        <taxon>Enterobacteriaceae</taxon>
        <taxon>Salmonella</taxon>
    </lineage>
</organism>
<gene>
    <name evidence="1" type="primary">fabA</name>
    <name type="ordered locus">SCH_1019</name>
</gene>
<reference key="1">
    <citation type="journal article" date="2005" name="Nucleic Acids Res.">
        <title>The genome sequence of Salmonella enterica serovar Choleraesuis, a highly invasive and resistant zoonotic pathogen.</title>
        <authorList>
            <person name="Chiu C.-H."/>
            <person name="Tang P."/>
            <person name="Chu C."/>
            <person name="Hu S."/>
            <person name="Bao Q."/>
            <person name="Yu J."/>
            <person name="Chou Y.-Y."/>
            <person name="Wang H.-S."/>
            <person name="Lee Y.-S."/>
        </authorList>
    </citation>
    <scope>NUCLEOTIDE SEQUENCE [LARGE SCALE GENOMIC DNA]</scope>
    <source>
        <strain>SC-B67</strain>
    </source>
</reference>
<dbReference type="EC" id="4.2.1.59" evidence="1"/>
<dbReference type="EC" id="5.3.3.14" evidence="1"/>
<dbReference type="EMBL" id="AE017220">
    <property type="protein sequence ID" value="AAX64925.1"/>
    <property type="molecule type" value="Genomic_DNA"/>
</dbReference>
<dbReference type="RefSeq" id="WP_001539648.1">
    <property type="nucleotide sequence ID" value="NC_006905.1"/>
</dbReference>
<dbReference type="SMR" id="Q57QT6"/>
<dbReference type="KEGG" id="sec:SCH_1019"/>
<dbReference type="HOGENOM" id="CLU_097925_0_0_6"/>
<dbReference type="UniPathway" id="UPA00094"/>
<dbReference type="Proteomes" id="UP000000538">
    <property type="component" value="Chromosome"/>
</dbReference>
<dbReference type="GO" id="GO:0005737">
    <property type="term" value="C:cytoplasm"/>
    <property type="evidence" value="ECO:0007669"/>
    <property type="project" value="UniProtKB-SubCell"/>
</dbReference>
<dbReference type="GO" id="GO:0019171">
    <property type="term" value="F:(3R)-hydroxyacyl-[acyl-carrier-protein] dehydratase activity"/>
    <property type="evidence" value="ECO:0007669"/>
    <property type="project" value="UniProtKB-UniRule"/>
</dbReference>
<dbReference type="GO" id="GO:0034017">
    <property type="term" value="F:trans-2-decenoyl-acyl-carrier-protein isomerase activity"/>
    <property type="evidence" value="ECO:0007669"/>
    <property type="project" value="UniProtKB-UniRule"/>
</dbReference>
<dbReference type="GO" id="GO:0006636">
    <property type="term" value="P:unsaturated fatty acid biosynthetic process"/>
    <property type="evidence" value="ECO:0007669"/>
    <property type="project" value="UniProtKB-UniRule"/>
</dbReference>
<dbReference type="CDD" id="cd01287">
    <property type="entry name" value="FabA"/>
    <property type="match status" value="1"/>
</dbReference>
<dbReference type="FunFam" id="3.10.129.10:FF:000003">
    <property type="entry name" value="3-hydroxydecanoyl-[acyl-carrier-protein] dehydratase"/>
    <property type="match status" value="1"/>
</dbReference>
<dbReference type="Gene3D" id="3.10.129.10">
    <property type="entry name" value="Hotdog Thioesterase"/>
    <property type="match status" value="1"/>
</dbReference>
<dbReference type="HAMAP" id="MF_00405">
    <property type="entry name" value="FabA"/>
    <property type="match status" value="1"/>
</dbReference>
<dbReference type="InterPro" id="IPR010083">
    <property type="entry name" value="FabA"/>
</dbReference>
<dbReference type="InterPro" id="IPR013114">
    <property type="entry name" value="FabA_FabZ"/>
</dbReference>
<dbReference type="InterPro" id="IPR029069">
    <property type="entry name" value="HotDog_dom_sf"/>
</dbReference>
<dbReference type="NCBIfam" id="TIGR01749">
    <property type="entry name" value="fabA"/>
    <property type="match status" value="1"/>
</dbReference>
<dbReference type="NCBIfam" id="NF003509">
    <property type="entry name" value="PRK05174.1"/>
    <property type="match status" value="1"/>
</dbReference>
<dbReference type="PANTHER" id="PTHR30272">
    <property type="entry name" value="3-HYDROXYACYL-[ACYL-CARRIER-PROTEIN] DEHYDRATASE"/>
    <property type="match status" value="1"/>
</dbReference>
<dbReference type="PANTHER" id="PTHR30272:SF8">
    <property type="entry name" value="3-HYDROXYDECANOYL-[ACYL-CARRIER-PROTEIN] DEHYDRATASE"/>
    <property type="match status" value="1"/>
</dbReference>
<dbReference type="Pfam" id="PF07977">
    <property type="entry name" value="FabA"/>
    <property type="match status" value="1"/>
</dbReference>
<dbReference type="SUPFAM" id="SSF54637">
    <property type="entry name" value="Thioesterase/thiol ester dehydrase-isomerase"/>
    <property type="match status" value="1"/>
</dbReference>
<comment type="function">
    <text evidence="1">Necessary for the introduction of cis unsaturation into fatty acids. Catalyzes the dehydration of (3R)-3-hydroxydecanoyl-ACP to E-(2)-decenoyl-ACP and then its isomerization to Z-(3)-decenoyl-ACP. Can catalyze the dehydratase reaction for beta-hydroxyacyl-ACPs with saturated chain lengths up to 16:0, being most active on intermediate chain length.</text>
</comment>
<comment type="catalytic activity">
    <reaction evidence="1">
        <text>a (3R)-hydroxyacyl-[ACP] = a (2E)-enoyl-[ACP] + H2O</text>
        <dbReference type="Rhea" id="RHEA:13097"/>
        <dbReference type="Rhea" id="RHEA-COMP:9925"/>
        <dbReference type="Rhea" id="RHEA-COMP:9945"/>
        <dbReference type="ChEBI" id="CHEBI:15377"/>
        <dbReference type="ChEBI" id="CHEBI:78784"/>
        <dbReference type="ChEBI" id="CHEBI:78827"/>
        <dbReference type="EC" id="4.2.1.59"/>
    </reaction>
</comment>
<comment type="catalytic activity">
    <reaction evidence="1">
        <text>(3R)-hydroxydecanoyl-[ACP] = (2E)-decenoyl-[ACP] + H2O</text>
        <dbReference type="Rhea" id="RHEA:41860"/>
        <dbReference type="Rhea" id="RHEA-COMP:9638"/>
        <dbReference type="Rhea" id="RHEA-COMP:9639"/>
        <dbReference type="ChEBI" id="CHEBI:15377"/>
        <dbReference type="ChEBI" id="CHEBI:78466"/>
        <dbReference type="ChEBI" id="CHEBI:78467"/>
    </reaction>
</comment>
<comment type="catalytic activity">
    <reaction evidence="1">
        <text>(2E)-decenoyl-[ACP] = (3Z)-decenoyl-[ACP]</text>
        <dbReference type="Rhea" id="RHEA:23568"/>
        <dbReference type="Rhea" id="RHEA-COMP:9639"/>
        <dbReference type="Rhea" id="RHEA-COMP:9927"/>
        <dbReference type="ChEBI" id="CHEBI:78467"/>
        <dbReference type="ChEBI" id="CHEBI:78798"/>
        <dbReference type="EC" id="5.3.3.14"/>
    </reaction>
</comment>
<comment type="pathway">
    <text evidence="1">Lipid metabolism; fatty acid biosynthesis.</text>
</comment>
<comment type="subunit">
    <text evidence="1">Homodimer.</text>
</comment>
<comment type="subcellular location">
    <subcellularLocation>
        <location evidence="1">Cytoplasm</location>
    </subcellularLocation>
</comment>
<comment type="similarity">
    <text evidence="1">Belongs to the thioester dehydratase family. FabA subfamily.</text>
</comment>
<feature type="chain" id="PRO_0000267749" description="3-hydroxydecanoyl-[acyl-carrier-protein] dehydratase">
    <location>
        <begin position="1"/>
        <end position="172"/>
    </location>
</feature>
<feature type="active site" evidence="1">
    <location>
        <position position="71"/>
    </location>
</feature>
<accession>Q57QT6</accession>